<keyword id="KW-1015">Disulfide bond</keyword>
<keyword id="KW-0872">Ion channel impairing toxin</keyword>
<keyword id="KW-0528">Neurotoxin</keyword>
<keyword id="KW-0964">Secreted</keyword>
<keyword id="KW-0732">Signal</keyword>
<keyword id="KW-0800">Toxin</keyword>
<keyword id="KW-0738">Voltage-gated sodium channel impairing toxin</keyword>
<comment type="function">
    <text evidence="5">Putative sodium channel toxin.</text>
</comment>
<comment type="subcellular location">
    <subcellularLocation>
        <location evidence="5">Secreted</location>
    </subcellularLocation>
</comment>
<comment type="tissue specificity">
    <text evidence="5">Expressed by the venom gland.</text>
</comment>
<comment type="domain">
    <text evidence="4">Has the structural arrangement of an alpha-helix connected to antiparallel beta-sheets by disulfide bonds (CS-alpha/beta).</text>
</comment>
<comment type="similarity">
    <text evidence="4">Belongs to the long (3 C-C) scorpion toxin superfamily. Sodium channel inhibitor family.</text>
</comment>
<organism>
    <name type="scientific">Tityus serrulatus</name>
    <name type="common">Brazilian scorpion</name>
    <dbReference type="NCBI Taxonomy" id="6887"/>
    <lineage>
        <taxon>Eukaryota</taxon>
        <taxon>Metazoa</taxon>
        <taxon>Ecdysozoa</taxon>
        <taxon>Arthropoda</taxon>
        <taxon>Chelicerata</taxon>
        <taxon>Arachnida</taxon>
        <taxon>Scorpiones</taxon>
        <taxon>Buthida</taxon>
        <taxon>Buthoidea</taxon>
        <taxon>Buthidae</taxon>
        <taxon>Tityus</taxon>
    </lineage>
</organism>
<evidence type="ECO:0000255" key="1"/>
<evidence type="ECO:0000255" key="2">
    <source>
        <dbReference type="PROSITE-ProRule" id="PRU01210"/>
    </source>
</evidence>
<evidence type="ECO:0000303" key="3">
    <source>
    </source>
</evidence>
<evidence type="ECO:0000305" key="4"/>
<evidence type="ECO:0000305" key="5">
    <source>
    </source>
</evidence>
<evidence type="ECO:0000312" key="6">
    <source>
        <dbReference type="EMBL" id="QPD99030.1"/>
    </source>
</evidence>
<protein>
    <recommendedName>
        <fullName evidence="3">Putative sodium channel toxin Ts39</fullName>
    </recommendedName>
    <alternativeName>
        <fullName evidence="4">Tityustoxin-39</fullName>
    </alternativeName>
</protein>
<feature type="signal peptide" evidence="1">
    <location>
        <begin position="1"/>
        <end position="22"/>
    </location>
</feature>
<feature type="chain" id="PRO_5031526974" description="Putative sodium channel toxin Ts39">
    <location>
        <begin position="23"/>
        <end position="73"/>
    </location>
</feature>
<feature type="domain" description="LCN-type CS-alpha/beta" evidence="2">
    <location>
        <begin position="24"/>
        <end position="73"/>
    </location>
</feature>
<feature type="disulfide bond" evidence="2">
    <location>
        <begin position="37"/>
        <end position="62"/>
    </location>
</feature>
<feature type="disulfide bond" evidence="2">
    <location>
        <begin position="47"/>
        <end position="67"/>
    </location>
</feature>
<feature type="disulfide bond" evidence="2">
    <location>
        <begin position="51"/>
        <end position="69"/>
    </location>
</feature>
<sequence>MKTLNFCLFLVIISSLTVRVFCLNDRFLTVNDNYVICLYINKSFVNCENLCKAYMNAKDGFCRQPHCFCTDVE</sequence>
<proteinExistence type="inferred from homology"/>
<name>SCX39_TITSE</name>
<dbReference type="EMBL" id="MT081348">
    <property type="protein sequence ID" value="QPD99030.1"/>
    <property type="molecule type" value="mRNA"/>
</dbReference>
<dbReference type="SMR" id="A0A7S8MV32"/>
<dbReference type="GO" id="GO:0005576">
    <property type="term" value="C:extracellular region"/>
    <property type="evidence" value="ECO:0007669"/>
    <property type="project" value="UniProtKB-SubCell"/>
</dbReference>
<dbReference type="GO" id="GO:0008200">
    <property type="term" value="F:ion channel inhibitor activity"/>
    <property type="evidence" value="ECO:0007669"/>
    <property type="project" value="InterPro"/>
</dbReference>
<dbReference type="GO" id="GO:0017080">
    <property type="term" value="F:sodium channel regulator activity"/>
    <property type="evidence" value="ECO:0007669"/>
    <property type="project" value="UniProtKB-KW"/>
</dbReference>
<dbReference type="GO" id="GO:0090729">
    <property type="term" value="F:toxin activity"/>
    <property type="evidence" value="ECO:0007669"/>
    <property type="project" value="UniProtKB-KW"/>
</dbReference>
<dbReference type="Gene3D" id="3.30.30.10">
    <property type="entry name" value="Knottin, scorpion toxin-like"/>
    <property type="match status" value="1"/>
</dbReference>
<dbReference type="InterPro" id="IPR044062">
    <property type="entry name" value="LCN-type_CS_alpha_beta_dom"/>
</dbReference>
<dbReference type="InterPro" id="IPR036574">
    <property type="entry name" value="Scorpion_toxin-like_sf"/>
</dbReference>
<dbReference type="SUPFAM" id="SSF57095">
    <property type="entry name" value="Scorpion toxin-like"/>
    <property type="match status" value="1"/>
</dbReference>
<dbReference type="PROSITE" id="PS51863">
    <property type="entry name" value="LCN_CSAB"/>
    <property type="match status" value="1"/>
</dbReference>
<reference evidence="6" key="1">
    <citation type="journal article" date="2021" name="Toxicon">
        <title>Novel components of Tityus serrulatus venom: a transcriptomic approach.</title>
        <authorList>
            <person name="Kalapothakis Y."/>
            <person name="Miranda K."/>
            <person name="Pereira A.H."/>
            <person name="Witt A.S.A."/>
            <person name="Marani C."/>
            <person name="Martins A.P."/>
            <person name="Leal H.G."/>
            <person name="Campos-Junior E."/>
            <person name="Pimenta A.M.C."/>
            <person name="Borges A."/>
            <person name="Chavez-Olortegui C."/>
            <person name="Kalapothakis E."/>
        </authorList>
    </citation>
    <scope>NUCLEOTIDE SEQUENCE [MRNA]</scope>
    <source>
        <tissue>Telson</tissue>
    </source>
</reference>
<accession>A0A7S8MV32</accession>